<reference key="1">
    <citation type="journal article" date="2004" name="Proc. Natl. Acad. Sci. U.S.A.">
        <title>Complete genomes of two clinical Staphylococcus aureus strains: evidence for the rapid evolution of virulence and drug resistance.</title>
        <authorList>
            <person name="Holden M.T.G."/>
            <person name="Feil E.J."/>
            <person name="Lindsay J.A."/>
            <person name="Peacock S.J."/>
            <person name="Day N.P.J."/>
            <person name="Enright M.C."/>
            <person name="Foster T.J."/>
            <person name="Moore C.E."/>
            <person name="Hurst L."/>
            <person name="Atkin R."/>
            <person name="Barron A."/>
            <person name="Bason N."/>
            <person name="Bentley S.D."/>
            <person name="Chillingworth C."/>
            <person name="Chillingworth T."/>
            <person name="Churcher C."/>
            <person name="Clark L."/>
            <person name="Corton C."/>
            <person name="Cronin A."/>
            <person name="Doggett J."/>
            <person name="Dowd L."/>
            <person name="Feltwell T."/>
            <person name="Hance Z."/>
            <person name="Harris B."/>
            <person name="Hauser H."/>
            <person name="Holroyd S."/>
            <person name="Jagels K."/>
            <person name="James K.D."/>
            <person name="Lennard N."/>
            <person name="Line A."/>
            <person name="Mayes R."/>
            <person name="Moule S."/>
            <person name="Mungall K."/>
            <person name="Ormond D."/>
            <person name="Quail M.A."/>
            <person name="Rabbinowitsch E."/>
            <person name="Rutherford K.M."/>
            <person name="Sanders M."/>
            <person name="Sharp S."/>
            <person name="Simmonds M."/>
            <person name="Stevens K."/>
            <person name="Whitehead S."/>
            <person name="Barrell B.G."/>
            <person name="Spratt B.G."/>
            <person name="Parkhill J."/>
        </authorList>
    </citation>
    <scope>NUCLEOTIDE SEQUENCE [LARGE SCALE GENOMIC DNA]</scope>
    <source>
        <strain>MSSA476</strain>
    </source>
</reference>
<comment type="function">
    <text evidence="1">In eubacteria ppGpp (guanosine 3'-diphosphate 5'-diphosphate) is a mediator of the stringent response that coordinates a variety of cellular activities in response to changes in nutritional abundance. This enzyme catalyzes the formation of pppGpp which is then hydrolyzed to form ppGpp (By similarity).</text>
</comment>
<comment type="catalytic activity">
    <reaction>
        <text>GTP + ATP = guanosine 3'-diphosphate 5'-triphosphate + AMP</text>
        <dbReference type="Rhea" id="RHEA:22088"/>
        <dbReference type="ChEBI" id="CHEBI:30616"/>
        <dbReference type="ChEBI" id="CHEBI:37565"/>
        <dbReference type="ChEBI" id="CHEBI:142410"/>
        <dbReference type="ChEBI" id="CHEBI:456215"/>
        <dbReference type="EC" id="2.7.6.5"/>
    </reaction>
</comment>
<comment type="pathway">
    <text>Purine metabolism; ppGpp biosynthesis; ppGpp from GTP: step 1/2.</text>
</comment>
<comment type="similarity">
    <text evidence="5">Belongs to the RelA/SpoT family.</text>
</comment>
<sequence>MNGVYHIMNNEYPYSADEVLHKAKSYLSADEYEYVLKSYHIAYEAHKGQFRKNGLPYIMHPIQVAGILTEMRLDGPTIVAGFLHDVIEDTPYTFEDVKEMFNEEVARIVDGVTKLKKVKYRSKEEQQAENHRKLFIAIAKDVRVILVKLADRLHNMRTLKAMPREKQIRISRETLEIYAPLAHRLGINTIKWELEDTALRYIDNVQYFRIVNLMKKKRSEREAYIETAIDRIRTEMDRMNIEGDINGRPKHIYSIYRKMMKQKKQFDQIFDLLAIRVIVNSINDCYAILGLVHTLWKPMPGRFKDYIAMPKQNLYQSLHTTVVGPNGDPLEIQIRTFDMHEIAEHGVAAHWAYKEGKKVSEKDQTYQNKLNWLKELAEADHTSSDAQEFMETLKYDLQSDKVYAFTPASDVIELPYGAVPIDFAYAIHSEVGNKMIGAKVNGKIVPIDYILQTGDIVEIRTSKHSYGPSRDWLKIVKSSSAKGKIKSFFKKQDRSSNIEKGRMMVEVEIKEQGFRVEDILTEKNIQVVNEKYNFANEDDLFAAVGFGGVTSLQIVNKLTERQRILDKQRALNEAQEVTKSLPIKDNIITDSGVYVEGLENVLIKLSKCCNPIPGDDIVGYITKGHGIKVHRTDCPNIKNETERLINVEWVKSKDATQKYQVDLEVTAYDRNGLLNEVLQAVSSTAGNLIKVSGRSDIDKNAIINISVMVKNVNDVYRVVEKIKQLGDVYTVTRVWN</sequence>
<protein>
    <recommendedName>
        <fullName>GTP pyrophosphokinase</fullName>
        <ecNumber>2.7.6.5</ecNumber>
    </recommendedName>
    <alternativeName>
        <fullName>(p)ppGpp synthase</fullName>
    </alternativeName>
    <alternativeName>
        <fullName>ATP:GTP 3'-pyrophosphotransferase</fullName>
    </alternativeName>
    <alternativeName>
        <fullName>ppGpp synthase I</fullName>
    </alternativeName>
</protein>
<dbReference type="EC" id="2.7.6.5"/>
<dbReference type="EMBL" id="BX571857">
    <property type="protein sequence ID" value="CAG43371.1"/>
    <property type="molecule type" value="Genomic_DNA"/>
</dbReference>
<dbReference type="SMR" id="Q6G8T5"/>
<dbReference type="KEGG" id="sas:SAS1570"/>
<dbReference type="HOGENOM" id="CLU_012300_3_0_9"/>
<dbReference type="UniPathway" id="UPA00908">
    <property type="reaction ID" value="UER00884"/>
</dbReference>
<dbReference type="GO" id="GO:0005886">
    <property type="term" value="C:plasma membrane"/>
    <property type="evidence" value="ECO:0007669"/>
    <property type="project" value="TreeGrafter"/>
</dbReference>
<dbReference type="GO" id="GO:0005524">
    <property type="term" value="F:ATP binding"/>
    <property type="evidence" value="ECO:0007669"/>
    <property type="project" value="UniProtKB-KW"/>
</dbReference>
<dbReference type="GO" id="GO:0005525">
    <property type="term" value="F:GTP binding"/>
    <property type="evidence" value="ECO:0007669"/>
    <property type="project" value="UniProtKB-KW"/>
</dbReference>
<dbReference type="GO" id="GO:0008728">
    <property type="term" value="F:GTP diphosphokinase activity"/>
    <property type="evidence" value="ECO:0007669"/>
    <property type="project" value="UniProtKB-EC"/>
</dbReference>
<dbReference type="GO" id="GO:0016301">
    <property type="term" value="F:kinase activity"/>
    <property type="evidence" value="ECO:0007669"/>
    <property type="project" value="UniProtKB-KW"/>
</dbReference>
<dbReference type="GO" id="GO:0015970">
    <property type="term" value="P:guanosine tetraphosphate biosynthetic process"/>
    <property type="evidence" value="ECO:0007669"/>
    <property type="project" value="UniProtKB-UniPathway"/>
</dbReference>
<dbReference type="CDD" id="cd04876">
    <property type="entry name" value="ACT_RelA-SpoT"/>
    <property type="match status" value="1"/>
</dbReference>
<dbReference type="CDD" id="cd00077">
    <property type="entry name" value="HDc"/>
    <property type="match status" value="1"/>
</dbReference>
<dbReference type="CDD" id="cd05399">
    <property type="entry name" value="NT_Rel-Spo_like"/>
    <property type="match status" value="1"/>
</dbReference>
<dbReference type="CDD" id="cd01668">
    <property type="entry name" value="TGS_RSH"/>
    <property type="match status" value="1"/>
</dbReference>
<dbReference type="FunFam" id="3.10.20.30:FF:000002">
    <property type="entry name" value="GTP pyrophosphokinase (RelA/SpoT)"/>
    <property type="match status" value="1"/>
</dbReference>
<dbReference type="FunFam" id="1.10.3210.10:FF:000001">
    <property type="entry name" value="GTP pyrophosphokinase RelA"/>
    <property type="match status" value="1"/>
</dbReference>
<dbReference type="FunFam" id="3.30.460.10:FF:000001">
    <property type="entry name" value="GTP pyrophosphokinase RelA"/>
    <property type="match status" value="1"/>
</dbReference>
<dbReference type="Gene3D" id="3.10.20.30">
    <property type="match status" value="1"/>
</dbReference>
<dbReference type="Gene3D" id="3.30.70.260">
    <property type="match status" value="1"/>
</dbReference>
<dbReference type="Gene3D" id="3.30.460.10">
    <property type="entry name" value="Beta Polymerase, domain 2"/>
    <property type="match status" value="1"/>
</dbReference>
<dbReference type="Gene3D" id="1.10.3210.10">
    <property type="entry name" value="Hypothetical protein af1432"/>
    <property type="match status" value="1"/>
</dbReference>
<dbReference type="InterPro" id="IPR045865">
    <property type="entry name" value="ACT-like_dom_sf"/>
</dbReference>
<dbReference type="InterPro" id="IPR002912">
    <property type="entry name" value="ACT_dom"/>
</dbReference>
<dbReference type="InterPro" id="IPR012675">
    <property type="entry name" value="Beta-grasp_dom_sf"/>
</dbReference>
<dbReference type="InterPro" id="IPR003607">
    <property type="entry name" value="HD/PDEase_dom"/>
</dbReference>
<dbReference type="InterPro" id="IPR006674">
    <property type="entry name" value="HD_domain"/>
</dbReference>
<dbReference type="InterPro" id="IPR043519">
    <property type="entry name" value="NT_sf"/>
</dbReference>
<dbReference type="InterPro" id="IPR004811">
    <property type="entry name" value="RelA/Spo_fam"/>
</dbReference>
<dbReference type="InterPro" id="IPR045600">
    <property type="entry name" value="RelA/SpoT_AH_RIS"/>
</dbReference>
<dbReference type="InterPro" id="IPR007685">
    <property type="entry name" value="RelA_SpoT"/>
</dbReference>
<dbReference type="InterPro" id="IPR004095">
    <property type="entry name" value="TGS"/>
</dbReference>
<dbReference type="InterPro" id="IPR012676">
    <property type="entry name" value="TGS-like"/>
</dbReference>
<dbReference type="InterPro" id="IPR033655">
    <property type="entry name" value="TGS_RelA/SpoT"/>
</dbReference>
<dbReference type="NCBIfam" id="TIGR00691">
    <property type="entry name" value="spoT_relA"/>
    <property type="match status" value="1"/>
</dbReference>
<dbReference type="PANTHER" id="PTHR21262:SF31">
    <property type="entry name" value="GTP PYROPHOSPHOKINASE"/>
    <property type="match status" value="1"/>
</dbReference>
<dbReference type="PANTHER" id="PTHR21262">
    <property type="entry name" value="GUANOSINE-3',5'-BIS DIPHOSPHATE 3'-PYROPHOSPHOHYDROLASE"/>
    <property type="match status" value="1"/>
</dbReference>
<dbReference type="Pfam" id="PF13291">
    <property type="entry name" value="ACT_4"/>
    <property type="match status" value="1"/>
</dbReference>
<dbReference type="Pfam" id="PF13328">
    <property type="entry name" value="HD_4"/>
    <property type="match status" value="1"/>
</dbReference>
<dbReference type="Pfam" id="PF19296">
    <property type="entry name" value="RelA_AH_RIS"/>
    <property type="match status" value="1"/>
</dbReference>
<dbReference type="Pfam" id="PF04607">
    <property type="entry name" value="RelA_SpoT"/>
    <property type="match status" value="1"/>
</dbReference>
<dbReference type="Pfam" id="PF02824">
    <property type="entry name" value="TGS"/>
    <property type="match status" value="1"/>
</dbReference>
<dbReference type="SMART" id="SM00471">
    <property type="entry name" value="HDc"/>
    <property type="match status" value="1"/>
</dbReference>
<dbReference type="SMART" id="SM00954">
    <property type="entry name" value="RelA_SpoT"/>
    <property type="match status" value="1"/>
</dbReference>
<dbReference type="SUPFAM" id="SSF55021">
    <property type="entry name" value="ACT-like"/>
    <property type="match status" value="1"/>
</dbReference>
<dbReference type="SUPFAM" id="SSF109604">
    <property type="entry name" value="HD-domain/PDEase-like"/>
    <property type="match status" value="1"/>
</dbReference>
<dbReference type="SUPFAM" id="SSF81301">
    <property type="entry name" value="Nucleotidyltransferase"/>
    <property type="match status" value="1"/>
</dbReference>
<dbReference type="SUPFAM" id="SSF81271">
    <property type="entry name" value="TGS-like"/>
    <property type="match status" value="1"/>
</dbReference>
<dbReference type="PROSITE" id="PS51671">
    <property type="entry name" value="ACT"/>
    <property type="match status" value="1"/>
</dbReference>
<dbReference type="PROSITE" id="PS51831">
    <property type="entry name" value="HD"/>
    <property type="match status" value="1"/>
</dbReference>
<dbReference type="PROSITE" id="PS51880">
    <property type="entry name" value="TGS"/>
    <property type="match status" value="1"/>
</dbReference>
<evidence type="ECO:0000250" key="1"/>
<evidence type="ECO:0000255" key="2">
    <source>
        <dbReference type="PROSITE-ProRule" id="PRU01007"/>
    </source>
</evidence>
<evidence type="ECO:0000255" key="3">
    <source>
        <dbReference type="PROSITE-ProRule" id="PRU01175"/>
    </source>
</evidence>
<evidence type="ECO:0000255" key="4">
    <source>
        <dbReference type="PROSITE-ProRule" id="PRU01228"/>
    </source>
</evidence>
<evidence type="ECO:0000305" key="5"/>
<proteinExistence type="inferred from homology"/>
<name>RELA_STAAS</name>
<organism>
    <name type="scientific">Staphylococcus aureus (strain MSSA476)</name>
    <dbReference type="NCBI Taxonomy" id="282459"/>
    <lineage>
        <taxon>Bacteria</taxon>
        <taxon>Bacillati</taxon>
        <taxon>Bacillota</taxon>
        <taxon>Bacilli</taxon>
        <taxon>Bacillales</taxon>
        <taxon>Staphylococcaceae</taxon>
        <taxon>Staphylococcus</taxon>
    </lineage>
</organism>
<feature type="chain" id="PRO_0000166558" description="GTP pyrophosphokinase">
    <location>
        <begin position="1"/>
        <end position="736"/>
    </location>
</feature>
<feature type="domain" description="HD" evidence="3">
    <location>
        <begin position="57"/>
        <end position="156"/>
    </location>
</feature>
<feature type="domain" description="TGS" evidence="4">
    <location>
        <begin position="400"/>
        <end position="461"/>
    </location>
</feature>
<feature type="domain" description="ACT" evidence="2">
    <location>
        <begin position="662"/>
        <end position="736"/>
    </location>
</feature>
<keyword id="KW-0067">ATP-binding</keyword>
<keyword id="KW-0342">GTP-binding</keyword>
<keyword id="KW-0418">Kinase</keyword>
<keyword id="KW-0547">Nucleotide-binding</keyword>
<keyword id="KW-0808">Transferase</keyword>
<gene>
    <name type="primary">relA</name>
    <name type="ordered locus">SAS1570</name>
</gene>
<accession>Q6G8T5</accession>